<dbReference type="EC" id="3.1.26.8" evidence="1"/>
<dbReference type="EMBL" id="AE009951">
    <property type="protein sequence ID" value="AAL94252.1"/>
    <property type="molecule type" value="Genomic_DNA"/>
</dbReference>
<dbReference type="RefSeq" id="NP_602953.1">
    <property type="nucleotide sequence ID" value="NC_003454.1"/>
</dbReference>
<dbReference type="RefSeq" id="WP_011016097.1">
    <property type="nucleotide sequence ID" value="NZ_CP028101.1"/>
</dbReference>
<dbReference type="SMR" id="Q8RH71"/>
<dbReference type="FunCoup" id="Q8RH71">
    <property type="interactions" value="25"/>
</dbReference>
<dbReference type="STRING" id="190304.FN0039"/>
<dbReference type="PaxDb" id="190304-FN0039"/>
<dbReference type="EnsemblBacteria" id="AAL94252">
    <property type="protein sequence ID" value="AAL94252"/>
    <property type="gene ID" value="FN0039"/>
</dbReference>
<dbReference type="GeneID" id="79782830"/>
<dbReference type="KEGG" id="fnu:FN0039"/>
<dbReference type="PATRIC" id="fig|190304.8.peg.632"/>
<dbReference type="eggNOG" id="COG1658">
    <property type="taxonomic scope" value="Bacteria"/>
</dbReference>
<dbReference type="HOGENOM" id="CLU_109405_0_0_0"/>
<dbReference type="InParanoid" id="Q8RH71"/>
<dbReference type="BioCyc" id="FNUC190304:G1FZS-652-MONOMER"/>
<dbReference type="Proteomes" id="UP000002521">
    <property type="component" value="Chromosome"/>
</dbReference>
<dbReference type="GO" id="GO:0005737">
    <property type="term" value="C:cytoplasm"/>
    <property type="evidence" value="ECO:0007669"/>
    <property type="project" value="UniProtKB-SubCell"/>
</dbReference>
<dbReference type="GO" id="GO:0046872">
    <property type="term" value="F:metal ion binding"/>
    <property type="evidence" value="ECO:0007669"/>
    <property type="project" value="UniProtKB-KW"/>
</dbReference>
<dbReference type="GO" id="GO:0043822">
    <property type="term" value="F:ribonuclease M5 activity"/>
    <property type="evidence" value="ECO:0000318"/>
    <property type="project" value="GO_Central"/>
</dbReference>
<dbReference type="GO" id="GO:0019843">
    <property type="term" value="F:rRNA binding"/>
    <property type="evidence" value="ECO:0007669"/>
    <property type="project" value="UniProtKB-KW"/>
</dbReference>
<dbReference type="GO" id="GO:0006364">
    <property type="term" value="P:rRNA processing"/>
    <property type="evidence" value="ECO:0000318"/>
    <property type="project" value="GO_Central"/>
</dbReference>
<dbReference type="CDD" id="cd01027">
    <property type="entry name" value="TOPRIM_RNase_M5_like"/>
    <property type="match status" value="1"/>
</dbReference>
<dbReference type="FunFam" id="3.40.1360.10:FF:000006">
    <property type="entry name" value="Ribonuclease M5"/>
    <property type="match status" value="1"/>
</dbReference>
<dbReference type="Gene3D" id="3.40.1360.10">
    <property type="match status" value="1"/>
</dbReference>
<dbReference type="HAMAP" id="MF_01469">
    <property type="entry name" value="RNase_M5"/>
    <property type="match status" value="1"/>
</dbReference>
<dbReference type="InterPro" id="IPR004466">
    <property type="entry name" value="RNase_M5"/>
</dbReference>
<dbReference type="InterPro" id="IPR025156">
    <property type="entry name" value="RNase_M5_C"/>
</dbReference>
<dbReference type="InterPro" id="IPR006171">
    <property type="entry name" value="TOPRIM_dom"/>
</dbReference>
<dbReference type="InterPro" id="IPR034141">
    <property type="entry name" value="TOPRIM_RNase_M5-like"/>
</dbReference>
<dbReference type="NCBIfam" id="TIGR00334">
    <property type="entry name" value="5S_RNA_mat_M5"/>
    <property type="match status" value="1"/>
</dbReference>
<dbReference type="PANTHER" id="PTHR39156">
    <property type="entry name" value="RIBONUCLEASE M5"/>
    <property type="match status" value="1"/>
</dbReference>
<dbReference type="PANTHER" id="PTHR39156:SF1">
    <property type="entry name" value="RIBONUCLEASE M5"/>
    <property type="match status" value="1"/>
</dbReference>
<dbReference type="Pfam" id="PF13331">
    <property type="entry name" value="DUF4093"/>
    <property type="match status" value="1"/>
</dbReference>
<dbReference type="Pfam" id="PF01751">
    <property type="entry name" value="Toprim"/>
    <property type="match status" value="1"/>
</dbReference>
<dbReference type="SMART" id="SM00493">
    <property type="entry name" value="TOPRIM"/>
    <property type="match status" value="1"/>
</dbReference>
<dbReference type="SUPFAM" id="SSF110455">
    <property type="entry name" value="Toprim domain"/>
    <property type="match status" value="1"/>
</dbReference>
<dbReference type="PROSITE" id="PS50880">
    <property type="entry name" value="TOPRIM"/>
    <property type="match status" value="1"/>
</dbReference>
<feature type="chain" id="PRO_0000416747" description="Ribonuclease M5">
    <location>
        <begin position="1"/>
        <end position="183"/>
    </location>
</feature>
<feature type="domain" description="Toprim" evidence="1">
    <location>
        <begin position="6"/>
        <end position="90"/>
    </location>
</feature>
<feature type="binding site" evidence="1">
    <location>
        <position position="12"/>
    </location>
    <ligand>
        <name>Mg(2+)</name>
        <dbReference type="ChEBI" id="CHEBI:18420"/>
        <label>1</label>
        <note>catalytic</note>
    </ligand>
</feature>
<feature type="binding site" evidence="1">
    <location>
        <position position="59"/>
    </location>
    <ligand>
        <name>Mg(2+)</name>
        <dbReference type="ChEBI" id="CHEBI:18420"/>
        <label>1</label>
        <note>catalytic</note>
    </ligand>
</feature>
<feature type="binding site" evidence="1">
    <location>
        <position position="59"/>
    </location>
    <ligand>
        <name>Mg(2+)</name>
        <dbReference type="ChEBI" id="CHEBI:18420"/>
        <label>2</label>
    </ligand>
</feature>
<feature type="binding site" evidence="1">
    <location>
        <position position="61"/>
    </location>
    <ligand>
        <name>Mg(2+)</name>
        <dbReference type="ChEBI" id="CHEBI:18420"/>
        <label>2</label>
    </ligand>
</feature>
<keyword id="KW-0963">Cytoplasm</keyword>
<keyword id="KW-0255">Endonuclease</keyword>
<keyword id="KW-0378">Hydrolase</keyword>
<keyword id="KW-0460">Magnesium</keyword>
<keyword id="KW-0479">Metal-binding</keyword>
<keyword id="KW-0540">Nuclease</keyword>
<keyword id="KW-1185">Reference proteome</keyword>
<keyword id="KW-0690">Ribosome biogenesis</keyword>
<keyword id="KW-0694">RNA-binding</keyword>
<keyword id="KW-0698">rRNA processing</keyword>
<keyword id="KW-0699">rRNA-binding</keyword>
<organism>
    <name type="scientific">Fusobacterium nucleatum subsp. nucleatum (strain ATCC 25586 / DSM 15643 / BCRC 10681 / CIP 101130 / JCM 8532 / KCTC 2640 / LMG 13131 / VPI 4355)</name>
    <dbReference type="NCBI Taxonomy" id="190304"/>
    <lineage>
        <taxon>Bacteria</taxon>
        <taxon>Fusobacteriati</taxon>
        <taxon>Fusobacteriota</taxon>
        <taxon>Fusobacteriia</taxon>
        <taxon>Fusobacteriales</taxon>
        <taxon>Fusobacteriaceae</taxon>
        <taxon>Fusobacterium</taxon>
    </lineage>
</organism>
<accession>Q8RH71</accession>
<sequence length="183" mass="20454">MKKKIKEVIVVEGKDDISAVKNAVDAEVFQVNGHAVRKNKSIEILKLAYENKGLIILTDPDYAGEEIRKYLCKHFPNAKNAYISRVSGTKDGDIGVENASPEDIITALEKARFSLDNSVNIFNLDLMMDYNLIGKDNSADLRSLLGAELGIGYSNGKQFMAKLNRYGISLEEFKKAYEKINMK</sequence>
<proteinExistence type="inferred from homology"/>
<reference key="1">
    <citation type="journal article" date="2002" name="J. Bacteriol.">
        <title>Genome sequence and analysis of the oral bacterium Fusobacterium nucleatum strain ATCC 25586.</title>
        <authorList>
            <person name="Kapatral V."/>
            <person name="Anderson I."/>
            <person name="Ivanova N."/>
            <person name="Reznik G."/>
            <person name="Los T."/>
            <person name="Lykidis A."/>
            <person name="Bhattacharyya A."/>
            <person name="Bartman A."/>
            <person name="Gardner W."/>
            <person name="Grechkin G."/>
            <person name="Zhu L."/>
            <person name="Vasieva O."/>
            <person name="Chu L."/>
            <person name="Kogan Y."/>
            <person name="Chaga O."/>
            <person name="Goltsman E."/>
            <person name="Bernal A."/>
            <person name="Larsen N."/>
            <person name="D'Souza M."/>
            <person name="Walunas T."/>
            <person name="Pusch G."/>
            <person name="Haselkorn R."/>
            <person name="Fonstein M."/>
            <person name="Kyrpides N.C."/>
            <person name="Overbeek R."/>
        </authorList>
    </citation>
    <scope>NUCLEOTIDE SEQUENCE [LARGE SCALE GENOMIC DNA]</scope>
    <source>
        <strain>ATCC 25586 / DSM 15643 / BCRC 10681 / CIP 101130 / JCM 8532 / KCTC 2640 / LMG 13131 / VPI 4355</strain>
    </source>
</reference>
<protein>
    <recommendedName>
        <fullName evidence="1">Ribonuclease M5</fullName>
        <ecNumber evidence="1">3.1.26.8</ecNumber>
    </recommendedName>
    <alternativeName>
        <fullName evidence="1">RNase M5</fullName>
    </alternativeName>
    <alternativeName>
        <fullName evidence="1">Ribosomal RNA terminal maturase M5</fullName>
    </alternativeName>
</protein>
<evidence type="ECO:0000255" key="1">
    <source>
        <dbReference type="HAMAP-Rule" id="MF_01469"/>
    </source>
</evidence>
<gene>
    <name evidence="1" type="primary">rnmV</name>
    <name type="ordered locus">FN0039</name>
</gene>
<name>RNM5_FUSNN</name>
<comment type="function">
    <text evidence="1">Required for correct processing of both the 5' and 3' ends of 5S rRNA precursor. Cleaves both sides of a double-stranded region yielding mature 5S rRNA in one step.</text>
</comment>
<comment type="catalytic activity">
    <reaction evidence="1">
        <text>Endonucleolytic cleavage of RNA, removing 21 and 42 nucleotides, respectively, from the 5'- and 3'-termini of a 5S-rRNA precursor.</text>
        <dbReference type="EC" id="3.1.26.8"/>
    </reaction>
</comment>
<comment type="cofactor">
    <cofactor evidence="1">
        <name>Mg(2+)</name>
        <dbReference type="ChEBI" id="CHEBI:18420"/>
    </cofactor>
    <text evidence="1">Binds two Mg(2+) per subunit.</text>
</comment>
<comment type="subcellular location">
    <subcellularLocation>
        <location evidence="1">Cytoplasm</location>
    </subcellularLocation>
</comment>
<comment type="similarity">
    <text evidence="1">Belongs to the ribonuclease M5 family.</text>
</comment>